<proteinExistence type="evidence at transcript level"/>
<accession>Q5AVR1</accession>
<accession>A0A1U8QL78</accession>
<accession>C8VBW5</accession>
<sequence>MLFNKIISLAATLATASALPFAPAPRSISGGVTLINNLSQDLYLWSVSGTASPMVTLPAGQSYQETWQINPTGGGISIKIGCSEDGSDVLQYEYTKVGDLLFWDMSSIDLSSGSPLVAAGFDVSIDDSSCDTVTCAPGDVNCSESYQYPDDHNTRACSSSAAYTLTLGTAN</sequence>
<gene>
    <name evidence="6" type="primary">calA</name>
    <name type="ORF">ANIA_07619</name>
</gene>
<dbReference type="EMBL" id="BN001304">
    <property type="protein sequence ID" value="CBF79755.1"/>
    <property type="molecule type" value="Genomic_DNA"/>
</dbReference>
<dbReference type="EMBL" id="AACD01000130">
    <property type="protein sequence ID" value="EAA61805.1"/>
    <property type="molecule type" value="Genomic_DNA"/>
</dbReference>
<dbReference type="RefSeq" id="XP_680888.1">
    <property type="nucleotide sequence ID" value="XM_675796.1"/>
</dbReference>
<dbReference type="SMR" id="Q5AVR1"/>
<dbReference type="GlyCosmos" id="Q5AVR1">
    <property type="glycosylation" value="2 sites, No reported glycans"/>
</dbReference>
<dbReference type="EnsemblFungi" id="CBF79755">
    <property type="protein sequence ID" value="CBF79755"/>
    <property type="gene ID" value="ANIA_07619"/>
</dbReference>
<dbReference type="GeneID" id="2869581"/>
<dbReference type="KEGG" id="ani:ANIA_07619"/>
<dbReference type="VEuPathDB" id="FungiDB:AN7619"/>
<dbReference type="eggNOG" id="ENOG502SSWE">
    <property type="taxonomic scope" value="Eukaryota"/>
</dbReference>
<dbReference type="HOGENOM" id="CLU_083650_2_0_1"/>
<dbReference type="InParanoid" id="Q5AVR1"/>
<dbReference type="OMA" id="ANVQNAC"/>
<dbReference type="OrthoDB" id="5144514at2759"/>
<dbReference type="Proteomes" id="UP000000560">
    <property type="component" value="Chromosome IV"/>
</dbReference>
<dbReference type="GO" id="GO:0005576">
    <property type="term" value="C:extracellular region"/>
    <property type="evidence" value="ECO:0007669"/>
    <property type="project" value="UniProtKB-SubCell"/>
</dbReference>
<dbReference type="GO" id="GO:0009847">
    <property type="term" value="P:spore germination"/>
    <property type="evidence" value="ECO:0000315"/>
    <property type="project" value="AspGD"/>
</dbReference>
<dbReference type="InterPro" id="IPR006771">
    <property type="entry name" value="CetA-like"/>
</dbReference>
<dbReference type="InterPro" id="IPR037176">
    <property type="entry name" value="Osmotin/thaumatin-like_sf"/>
</dbReference>
<dbReference type="PANTHER" id="PTHR36195">
    <property type="entry name" value="DOMAIN PROTEIN, PUTATIVE (AFU_ORTHOLOGUE AFUA_5G01990)-RELATED-RELATED"/>
    <property type="match status" value="1"/>
</dbReference>
<dbReference type="PANTHER" id="PTHR36195:SF6">
    <property type="entry name" value="SECRETED THAUMATIN-LIKE PROTEIN CALA"/>
    <property type="match status" value="1"/>
</dbReference>
<dbReference type="Pfam" id="PF04681">
    <property type="entry name" value="Bys1"/>
    <property type="match status" value="1"/>
</dbReference>
<dbReference type="SUPFAM" id="SSF49870">
    <property type="entry name" value="Osmotin, thaumatin-like protein"/>
    <property type="match status" value="1"/>
</dbReference>
<name>CALA_EMENI</name>
<reference key="1">
    <citation type="journal article" date="2005" name="Nature">
        <title>Sequencing of Aspergillus nidulans and comparative analysis with A. fumigatus and A. oryzae.</title>
        <authorList>
            <person name="Galagan J.E."/>
            <person name="Calvo S.E."/>
            <person name="Cuomo C."/>
            <person name="Ma L.-J."/>
            <person name="Wortman J.R."/>
            <person name="Batzoglou S."/>
            <person name="Lee S.-I."/>
            <person name="Bastuerkmen M."/>
            <person name="Spevak C.C."/>
            <person name="Clutterbuck J."/>
            <person name="Kapitonov V."/>
            <person name="Jurka J."/>
            <person name="Scazzocchio C."/>
            <person name="Farman M.L."/>
            <person name="Butler J."/>
            <person name="Purcell S."/>
            <person name="Harris S."/>
            <person name="Braus G.H."/>
            <person name="Draht O."/>
            <person name="Busch S."/>
            <person name="D'Enfert C."/>
            <person name="Bouchier C."/>
            <person name="Goldman G.H."/>
            <person name="Bell-Pedersen D."/>
            <person name="Griffiths-Jones S."/>
            <person name="Doonan J.H."/>
            <person name="Yu J."/>
            <person name="Vienken K."/>
            <person name="Pain A."/>
            <person name="Freitag M."/>
            <person name="Selker E.U."/>
            <person name="Archer D.B."/>
            <person name="Penalva M.A."/>
            <person name="Oakley B.R."/>
            <person name="Momany M."/>
            <person name="Tanaka T."/>
            <person name="Kumagai T."/>
            <person name="Asai K."/>
            <person name="Machida M."/>
            <person name="Nierman W.C."/>
            <person name="Denning D.W."/>
            <person name="Caddick M.X."/>
            <person name="Hynes M."/>
            <person name="Paoletti M."/>
            <person name="Fischer R."/>
            <person name="Miller B.L."/>
            <person name="Dyer P.S."/>
            <person name="Sachs M.S."/>
            <person name="Osmani S.A."/>
            <person name="Birren B.W."/>
        </authorList>
    </citation>
    <scope>NUCLEOTIDE SEQUENCE [LARGE SCALE GENOMIC DNA]</scope>
    <source>
        <strain>FGSC A4 / ATCC 38163 / CBS 112.46 / NRRL 194 / M139</strain>
    </source>
</reference>
<reference key="2">
    <citation type="journal article" date="2009" name="Fungal Genet. Biol.">
        <title>The 2008 update of the Aspergillus nidulans genome annotation: a community effort.</title>
        <authorList>
            <person name="Wortman J.R."/>
            <person name="Gilsenan J.M."/>
            <person name="Joardar V."/>
            <person name="Deegan J."/>
            <person name="Clutterbuck J."/>
            <person name="Andersen M.R."/>
            <person name="Archer D."/>
            <person name="Bencina M."/>
            <person name="Braus G."/>
            <person name="Coutinho P."/>
            <person name="von Dohren H."/>
            <person name="Doonan J."/>
            <person name="Driessen A.J."/>
            <person name="Durek P."/>
            <person name="Espeso E."/>
            <person name="Fekete E."/>
            <person name="Flipphi M."/>
            <person name="Estrada C.G."/>
            <person name="Geysens S."/>
            <person name="Goldman G."/>
            <person name="de Groot P.W."/>
            <person name="Hansen K."/>
            <person name="Harris S.D."/>
            <person name="Heinekamp T."/>
            <person name="Helmstaedt K."/>
            <person name="Henrissat B."/>
            <person name="Hofmann G."/>
            <person name="Homan T."/>
            <person name="Horio T."/>
            <person name="Horiuchi H."/>
            <person name="James S."/>
            <person name="Jones M."/>
            <person name="Karaffa L."/>
            <person name="Karanyi Z."/>
            <person name="Kato M."/>
            <person name="Keller N."/>
            <person name="Kelly D.E."/>
            <person name="Kiel J.A."/>
            <person name="Kim J.M."/>
            <person name="van der Klei I.J."/>
            <person name="Klis F.M."/>
            <person name="Kovalchuk A."/>
            <person name="Krasevec N."/>
            <person name="Kubicek C.P."/>
            <person name="Liu B."/>
            <person name="Maccabe A."/>
            <person name="Meyer V."/>
            <person name="Mirabito P."/>
            <person name="Miskei M."/>
            <person name="Mos M."/>
            <person name="Mullins J."/>
            <person name="Nelson D.R."/>
            <person name="Nielsen J."/>
            <person name="Oakley B.R."/>
            <person name="Osmani S.A."/>
            <person name="Pakula T."/>
            <person name="Paszewski A."/>
            <person name="Paulsen I."/>
            <person name="Pilsyk S."/>
            <person name="Pocsi I."/>
            <person name="Punt P.J."/>
            <person name="Ram A.F."/>
            <person name="Ren Q."/>
            <person name="Robellet X."/>
            <person name="Robson G."/>
            <person name="Seiboth B."/>
            <person name="van Solingen P."/>
            <person name="Specht T."/>
            <person name="Sun J."/>
            <person name="Taheri-Talesh N."/>
            <person name="Takeshita N."/>
            <person name="Ussery D."/>
            <person name="vanKuyk P.A."/>
            <person name="Visser H."/>
            <person name="van de Vondervoort P.J."/>
            <person name="de Vries R.P."/>
            <person name="Walton J."/>
            <person name="Xiang X."/>
            <person name="Xiong Y."/>
            <person name="Zeng A.P."/>
            <person name="Brandt B.W."/>
            <person name="Cornell M.J."/>
            <person name="van den Hondel C.A."/>
            <person name="Visser J."/>
            <person name="Oliver S.G."/>
            <person name="Turner G."/>
        </authorList>
    </citation>
    <scope>GENOME REANNOTATION</scope>
    <source>
        <strain>FGSC A4 / ATCC 38163 / CBS 112.46 / NRRL 194 / M139</strain>
    </source>
</reference>
<reference key="3">
    <citation type="journal article" date="2006" name="Fungal Genet. Biol.">
        <title>Analysis of the Aspergillus nidulans thaumatin-like cetA gene and evidence for transcriptional repression of pyr4 expression in the cetA-disrupted strain.</title>
        <authorList>
            <person name="Greenstein S."/>
            <person name="Shadkchan Y."/>
            <person name="Jadoun J."/>
            <person name="Sharon C."/>
            <person name="Markovich S."/>
            <person name="Osherov N."/>
        </authorList>
    </citation>
    <scope>INDUCTION</scope>
</reference>
<reference key="4">
    <citation type="journal article" date="2008" name="Fungal Genet. Biol.">
        <title>The Aspergillus nidulans cetA and calA genes are involved in conidial germination and cell wall morphogenesis.</title>
        <authorList>
            <person name="Belaish R."/>
            <person name="Sharon H."/>
            <person name="Levdansky E."/>
            <person name="Greenstein S."/>
            <person name="Shadkchan Y."/>
            <person name="Osherov N."/>
        </authorList>
    </citation>
    <scope>INDUCTION</scope>
    <scope>SUBCELLULAR LOCATION</scope>
    <scope>DISRUPTION PHENOTYPE</scope>
    <scope>FUNCTION</scope>
</reference>
<protein>
    <recommendedName>
        <fullName evidence="6">Secreted thaumatin-like protein calA</fullName>
    </recommendedName>
    <alternativeName>
        <fullName evidence="6">CetA-like protein A</fullName>
    </alternativeName>
</protein>
<keyword id="KW-0134">Cell wall</keyword>
<keyword id="KW-1015">Disulfide bond</keyword>
<keyword id="KW-0272">Extracellular matrix</keyword>
<keyword id="KW-0309">Germination</keyword>
<keyword id="KW-0325">Glycoprotein</keyword>
<keyword id="KW-1185">Reference proteome</keyword>
<keyword id="KW-0964">Secreted</keyword>
<keyword id="KW-0732">Signal</keyword>
<organism>
    <name type="scientific">Emericella nidulans (strain FGSC A4 / ATCC 38163 / CBS 112.46 / NRRL 194 / M139)</name>
    <name type="common">Aspergillus nidulans</name>
    <dbReference type="NCBI Taxonomy" id="227321"/>
    <lineage>
        <taxon>Eukaryota</taxon>
        <taxon>Fungi</taxon>
        <taxon>Dikarya</taxon>
        <taxon>Ascomycota</taxon>
        <taxon>Pezizomycotina</taxon>
        <taxon>Eurotiomycetes</taxon>
        <taxon>Eurotiomycetidae</taxon>
        <taxon>Eurotiales</taxon>
        <taxon>Aspergillaceae</taxon>
        <taxon>Aspergillus</taxon>
        <taxon>Aspergillus subgen. Nidulantes</taxon>
    </lineage>
</organism>
<feature type="signal peptide" evidence="1">
    <location>
        <begin position="1"/>
        <end position="18"/>
    </location>
</feature>
<feature type="chain" id="PRO_5010299494" description="Secreted thaumatin-like protein calA">
    <location>
        <begin position="19"/>
        <end position="171"/>
    </location>
</feature>
<feature type="glycosylation site" description="N-linked (GlcNAc...) asparagine" evidence="2">
    <location>
        <position position="37"/>
    </location>
</feature>
<feature type="glycosylation site" description="N-linked (GlcNAc...) asparagine" evidence="2">
    <location>
        <position position="141"/>
    </location>
</feature>
<feature type="disulfide bond" evidence="3">
    <location>
        <begin position="130"/>
        <end position="157"/>
    </location>
</feature>
<feature type="disulfide bond" evidence="3">
    <location>
        <begin position="135"/>
        <end position="142"/>
    </location>
</feature>
<evidence type="ECO:0000255" key="1"/>
<evidence type="ECO:0000255" key="2">
    <source>
        <dbReference type="PROSITE-ProRule" id="PRU00498"/>
    </source>
</evidence>
<evidence type="ECO:0000255" key="3">
    <source>
        <dbReference type="PROSITE-ProRule" id="PRU00699"/>
    </source>
</evidence>
<evidence type="ECO:0000269" key="4">
    <source>
    </source>
</evidence>
<evidence type="ECO:0000269" key="5">
    <source>
    </source>
</evidence>
<evidence type="ECO:0000303" key="6">
    <source>
    </source>
</evidence>
<evidence type="ECO:0000305" key="7"/>
<comment type="function">
    <text evidence="5">Secreted thaumatin-like protein that, with cetA, plays an essential role in early conidial germination with a possible role in cell wall remodeling (PubMed:17703972).</text>
</comment>
<comment type="subcellular location">
    <subcellularLocation>
        <location evidence="5">Secreted</location>
    </subcellularLocation>
    <subcellularLocation>
        <location evidence="5">Secreted</location>
        <location evidence="5">Extracellular space</location>
        <location evidence="5">Extracellular matrix</location>
    </subcellularLocation>
    <subcellularLocation>
        <location evidence="5">Secreted</location>
        <location evidence="5">Cell wall</location>
    </subcellularLocation>
    <text evidence="5">Present in the cell walls of the germinating conidia but not in the germtubes (PubMed:17703972).</text>
</comment>
<comment type="induction">
    <text evidence="4 5">Expression is inhibited by PKA activity but is not subject to glucose repression (PubMed:16376592). Not expressed in dormant conidia but only during germination (PubMed:16376592, PubMed:17703972).</text>
</comment>
<comment type="disruption phenotype">
    <text evidence="5">No visible phenotype. The double deletion of cetA and calA results in cell wall defects and lyse during germination, leading to the inhibition of germination (PubMed:17703972).</text>
</comment>
<comment type="similarity">
    <text evidence="7">Belongs to the thaumatin family.</text>
</comment>